<comment type="similarity">
    <text evidence="1">Belongs to the methyltransferase superfamily.</text>
</comment>
<evidence type="ECO:0000305" key="1"/>
<proteinExistence type="inferred from homology"/>
<organism>
    <name type="scientific">Bacillus subtilis (strain 168)</name>
    <dbReference type="NCBI Taxonomy" id="224308"/>
    <lineage>
        <taxon>Bacteria</taxon>
        <taxon>Bacillati</taxon>
        <taxon>Bacillota</taxon>
        <taxon>Bacilli</taxon>
        <taxon>Bacillales</taxon>
        <taxon>Bacillaceae</taxon>
        <taxon>Bacillus</taxon>
    </lineage>
</organism>
<dbReference type="EMBL" id="D64126">
    <property type="protein sequence ID" value="BAA10991.1"/>
    <property type="molecule type" value="Genomic_DNA"/>
</dbReference>
<dbReference type="EMBL" id="AL009126">
    <property type="protein sequence ID" value="CAB11927.2"/>
    <property type="molecule type" value="Genomic_DNA"/>
</dbReference>
<dbReference type="PIR" id="G69742">
    <property type="entry name" value="G69742"/>
</dbReference>
<dbReference type="RefSeq" id="NP_388032.2">
    <property type="nucleotide sequence ID" value="NC_000964.3"/>
</dbReference>
<dbReference type="RefSeq" id="WP_004399665.1">
    <property type="nucleotide sequence ID" value="NZ_OZ025638.1"/>
</dbReference>
<dbReference type="SMR" id="P70976"/>
<dbReference type="FunCoup" id="P70976">
    <property type="interactions" value="7"/>
</dbReference>
<dbReference type="STRING" id="224308.BSU01510"/>
<dbReference type="PaxDb" id="224308-BSU01510"/>
<dbReference type="EnsemblBacteria" id="CAB11927">
    <property type="protein sequence ID" value="CAB11927"/>
    <property type="gene ID" value="BSU_01510"/>
</dbReference>
<dbReference type="GeneID" id="938919"/>
<dbReference type="KEGG" id="bsu:BSU01510"/>
<dbReference type="PATRIC" id="fig|224308.179.peg.155"/>
<dbReference type="eggNOG" id="COG2226">
    <property type="taxonomic scope" value="Bacteria"/>
</dbReference>
<dbReference type="InParanoid" id="P70976"/>
<dbReference type="OrthoDB" id="9772751at2"/>
<dbReference type="BioCyc" id="BSUB:BSU01510-MONOMER"/>
<dbReference type="Proteomes" id="UP000001570">
    <property type="component" value="Chromosome"/>
</dbReference>
<dbReference type="GO" id="GO:0008168">
    <property type="term" value="F:methyltransferase activity"/>
    <property type="evidence" value="ECO:0000318"/>
    <property type="project" value="GO_Central"/>
</dbReference>
<dbReference type="GO" id="GO:0008757">
    <property type="term" value="F:S-adenosylmethionine-dependent methyltransferase activity"/>
    <property type="evidence" value="ECO:0007669"/>
    <property type="project" value="InterPro"/>
</dbReference>
<dbReference type="GO" id="GO:0032259">
    <property type="term" value="P:methylation"/>
    <property type="evidence" value="ECO:0007669"/>
    <property type="project" value="UniProtKB-KW"/>
</dbReference>
<dbReference type="CDD" id="cd02440">
    <property type="entry name" value="AdoMet_MTases"/>
    <property type="match status" value="1"/>
</dbReference>
<dbReference type="Gene3D" id="3.40.50.150">
    <property type="entry name" value="Vaccinia Virus protein VP39"/>
    <property type="match status" value="1"/>
</dbReference>
<dbReference type="InterPro" id="IPR013216">
    <property type="entry name" value="Methyltransf_11"/>
</dbReference>
<dbReference type="InterPro" id="IPR029063">
    <property type="entry name" value="SAM-dependent_MTases_sf"/>
</dbReference>
<dbReference type="Pfam" id="PF08241">
    <property type="entry name" value="Methyltransf_11"/>
    <property type="match status" value="1"/>
</dbReference>
<dbReference type="SUPFAM" id="SSF53335">
    <property type="entry name" value="S-adenosyl-L-methionine-dependent methyltransferases"/>
    <property type="match status" value="1"/>
</dbReference>
<feature type="chain" id="PRO_0000049452" description="Uncharacterized methyltransferase YbaJ">
    <location>
        <begin position="1"/>
        <end position="255"/>
    </location>
</feature>
<feature type="sequence conflict" description="In Ref. 1; BAA10991." evidence="1" ref="1">
    <original>K</original>
    <variation>E</variation>
    <location>
        <position position="10"/>
    </location>
</feature>
<feature type="sequence conflict" description="In Ref. 1; BAA10991." evidence="1" ref="1">
    <original>E</original>
    <variation>V</variation>
    <location>
        <position position="172"/>
    </location>
</feature>
<feature type="sequence conflict" description="In Ref. 1; BAA10991." evidence="1" ref="1">
    <original>K</original>
    <variation>E</variation>
    <location>
        <position position="200"/>
    </location>
</feature>
<sequence length="255" mass="28381">MNALVAHNSKAWDKKVETGNEWTVAVEQQVIEQAKKGNWDIRVTPMKDVPKDWFPPIKGLKVLCLASGGGQQGPVLAAAGADVTVLDNSEKQLNQDRMIAERDGLTIHTVKGSMDDLSVFNDESFDVIVHPVANVFVENVLPVWKEAYRVLKRNGILISGFVNPVVFLFDTELEQQGVLKVKHSIPYADPEDLPKHKVKKLIENNEALEFGHSLEDQIKGQIDAGFIVTGFYEDKGGFVLDQYIHTYSATRSVKV</sequence>
<gene>
    <name type="primary">ybaJ</name>
    <name type="ordered locus">BSU01510</name>
</gene>
<name>YBAJ_BACSU</name>
<keyword id="KW-0489">Methyltransferase</keyword>
<keyword id="KW-1185">Reference proteome</keyword>
<keyword id="KW-0808">Transferase</keyword>
<accession>P70976</accession>
<reference key="1">
    <citation type="journal article" date="1996" name="Microbiology">
        <title>Sequence analysis of a 50 kb region between spo0H and rrnH on the Bacillus subtilis chromosome.</title>
        <authorList>
            <person name="Yasumoto K."/>
            <person name="Liu H."/>
            <person name="Jeong S.M."/>
            <person name="Ohashi Y."/>
            <person name="Kakinuma S."/>
            <person name="Tanaka K."/>
            <person name="Kawamura F."/>
            <person name="Yoshikawa H."/>
            <person name="Takahashi H."/>
        </authorList>
    </citation>
    <scope>NUCLEOTIDE SEQUENCE [GENOMIC DNA]</scope>
    <source>
        <strain>168</strain>
    </source>
</reference>
<reference key="2">
    <citation type="journal article" date="1997" name="Nature">
        <title>The complete genome sequence of the Gram-positive bacterium Bacillus subtilis.</title>
        <authorList>
            <person name="Kunst F."/>
            <person name="Ogasawara N."/>
            <person name="Moszer I."/>
            <person name="Albertini A.M."/>
            <person name="Alloni G."/>
            <person name="Azevedo V."/>
            <person name="Bertero M.G."/>
            <person name="Bessieres P."/>
            <person name="Bolotin A."/>
            <person name="Borchert S."/>
            <person name="Borriss R."/>
            <person name="Boursier L."/>
            <person name="Brans A."/>
            <person name="Braun M."/>
            <person name="Brignell S.C."/>
            <person name="Bron S."/>
            <person name="Brouillet S."/>
            <person name="Bruschi C.V."/>
            <person name="Caldwell B."/>
            <person name="Capuano V."/>
            <person name="Carter N.M."/>
            <person name="Choi S.-K."/>
            <person name="Codani J.-J."/>
            <person name="Connerton I.F."/>
            <person name="Cummings N.J."/>
            <person name="Daniel R.A."/>
            <person name="Denizot F."/>
            <person name="Devine K.M."/>
            <person name="Duesterhoeft A."/>
            <person name="Ehrlich S.D."/>
            <person name="Emmerson P.T."/>
            <person name="Entian K.-D."/>
            <person name="Errington J."/>
            <person name="Fabret C."/>
            <person name="Ferrari E."/>
            <person name="Foulger D."/>
            <person name="Fritz C."/>
            <person name="Fujita M."/>
            <person name="Fujita Y."/>
            <person name="Fuma S."/>
            <person name="Galizzi A."/>
            <person name="Galleron N."/>
            <person name="Ghim S.-Y."/>
            <person name="Glaser P."/>
            <person name="Goffeau A."/>
            <person name="Golightly E.J."/>
            <person name="Grandi G."/>
            <person name="Guiseppi G."/>
            <person name="Guy B.J."/>
            <person name="Haga K."/>
            <person name="Haiech J."/>
            <person name="Harwood C.R."/>
            <person name="Henaut A."/>
            <person name="Hilbert H."/>
            <person name="Holsappel S."/>
            <person name="Hosono S."/>
            <person name="Hullo M.-F."/>
            <person name="Itaya M."/>
            <person name="Jones L.-M."/>
            <person name="Joris B."/>
            <person name="Karamata D."/>
            <person name="Kasahara Y."/>
            <person name="Klaerr-Blanchard M."/>
            <person name="Klein C."/>
            <person name="Kobayashi Y."/>
            <person name="Koetter P."/>
            <person name="Koningstein G."/>
            <person name="Krogh S."/>
            <person name="Kumano M."/>
            <person name="Kurita K."/>
            <person name="Lapidus A."/>
            <person name="Lardinois S."/>
            <person name="Lauber J."/>
            <person name="Lazarevic V."/>
            <person name="Lee S.-M."/>
            <person name="Levine A."/>
            <person name="Liu H."/>
            <person name="Masuda S."/>
            <person name="Mauel C."/>
            <person name="Medigue C."/>
            <person name="Medina N."/>
            <person name="Mellado R.P."/>
            <person name="Mizuno M."/>
            <person name="Moestl D."/>
            <person name="Nakai S."/>
            <person name="Noback M."/>
            <person name="Noone D."/>
            <person name="O'Reilly M."/>
            <person name="Ogawa K."/>
            <person name="Ogiwara A."/>
            <person name="Oudega B."/>
            <person name="Park S.-H."/>
            <person name="Parro V."/>
            <person name="Pohl T.M."/>
            <person name="Portetelle D."/>
            <person name="Porwollik S."/>
            <person name="Prescott A.M."/>
            <person name="Presecan E."/>
            <person name="Pujic P."/>
            <person name="Purnelle B."/>
            <person name="Rapoport G."/>
            <person name="Rey M."/>
            <person name="Reynolds S."/>
            <person name="Rieger M."/>
            <person name="Rivolta C."/>
            <person name="Rocha E."/>
            <person name="Roche B."/>
            <person name="Rose M."/>
            <person name="Sadaie Y."/>
            <person name="Sato T."/>
            <person name="Scanlan E."/>
            <person name="Schleich S."/>
            <person name="Schroeter R."/>
            <person name="Scoffone F."/>
            <person name="Sekiguchi J."/>
            <person name="Sekowska A."/>
            <person name="Seror S.J."/>
            <person name="Serror P."/>
            <person name="Shin B.-S."/>
            <person name="Soldo B."/>
            <person name="Sorokin A."/>
            <person name="Tacconi E."/>
            <person name="Takagi T."/>
            <person name="Takahashi H."/>
            <person name="Takemaru K."/>
            <person name="Takeuchi M."/>
            <person name="Tamakoshi A."/>
            <person name="Tanaka T."/>
            <person name="Terpstra P."/>
            <person name="Tognoni A."/>
            <person name="Tosato V."/>
            <person name="Uchiyama S."/>
            <person name="Vandenbol M."/>
            <person name="Vannier F."/>
            <person name="Vassarotti A."/>
            <person name="Viari A."/>
            <person name="Wambutt R."/>
            <person name="Wedler E."/>
            <person name="Wedler H."/>
            <person name="Weitzenegger T."/>
            <person name="Winters P."/>
            <person name="Wipat A."/>
            <person name="Yamamoto H."/>
            <person name="Yamane K."/>
            <person name="Yasumoto K."/>
            <person name="Yata K."/>
            <person name="Yoshida K."/>
            <person name="Yoshikawa H.-F."/>
            <person name="Zumstein E."/>
            <person name="Yoshikawa H."/>
            <person name="Danchin A."/>
        </authorList>
    </citation>
    <scope>NUCLEOTIDE SEQUENCE [LARGE SCALE GENOMIC DNA]</scope>
    <source>
        <strain>168</strain>
    </source>
</reference>
<reference key="3">
    <citation type="journal article" date="2009" name="Microbiology">
        <title>From a consortium sequence to a unified sequence: the Bacillus subtilis 168 reference genome a decade later.</title>
        <authorList>
            <person name="Barbe V."/>
            <person name="Cruveiller S."/>
            <person name="Kunst F."/>
            <person name="Lenoble P."/>
            <person name="Meurice G."/>
            <person name="Sekowska A."/>
            <person name="Vallenet D."/>
            <person name="Wang T."/>
            <person name="Moszer I."/>
            <person name="Medigue C."/>
            <person name="Danchin A."/>
        </authorList>
    </citation>
    <scope>SEQUENCE REVISION TO 10; 172 AND 200</scope>
</reference>
<protein>
    <recommendedName>
        <fullName>Uncharacterized methyltransferase YbaJ</fullName>
    </recommendedName>
</protein>